<comment type="function">
    <text evidence="3">Regulates UHRF2 function as a specific 5-hydroxymethylcytosine (5hmC) reader by regulating its chromatin localization.</text>
</comment>
<comment type="subunit">
    <text evidence="3">Interacts with UHRF2.</text>
</comment>
<comment type="interaction">
    <interactant intactId="EBI-6255994">
        <id>Q5T7W0</id>
    </interactant>
    <interactant intactId="EBI-751621">
        <id>P48730</id>
        <label>CSNK1D</label>
    </interactant>
    <organismsDiffer>false</organismsDiffer>
    <experiments>4</experiments>
</comment>
<comment type="interaction">
    <interactant intactId="EBI-6255994">
        <id>Q5T7W0</id>
    </interactant>
    <interactant intactId="EBI-749343">
        <id>P49674</id>
        <label>CSNK1E</label>
    </interactant>
    <organismsDiffer>false</organismsDiffer>
    <experiments>7</experiments>
</comment>
<comment type="interaction">
    <interactant intactId="EBI-6255994">
        <id>Q5T7W0</id>
    </interactant>
    <interactant intactId="EBI-12082590">
        <id>Q6W0C5</id>
        <label>DPPA3</label>
    </interactant>
    <organismsDiffer>false</organismsDiffer>
    <experiments>3</experiments>
</comment>
<comment type="interaction">
    <interactant intactId="EBI-6255994">
        <id>Q5T7W0</id>
    </interactant>
    <interactant intactId="EBI-11035716">
        <id>Q9UN86-2</id>
        <label>G3BP2</label>
    </interactant>
    <organismsDiffer>false</organismsDiffer>
    <experiments>3</experiments>
</comment>
<comment type="interaction">
    <interactant intactId="EBI-6255994">
        <id>Q5T7W0</id>
    </interactant>
    <interactant intactId="EBI-2340316">
        <id>O15344</id>
        <label>MID1</label>
    </interactant>
    <organismsDiffer>false</organismsDiffer>
    <experiments>3</experiments>
</comment>
<comment type="interaction">
    <interactant intactId="EBI-6255994">
        <id>Q5T7W0</id>
    </interactant>
    <interactant intactId="EBI-741158">
        <id>Q96HA8</id>
        <label>NTAQ1</label>
    </interactant>
    <organismsDiffer>false</organismsDiffer>
    <experiments>3</experiments>
</comment>
<comment type="interaction">
    <interactant intactId="EBI-6255994">
        <id>Q5T7W0</id>
    </interactant>
    <interactant intactId="EBI-12264956">
        <id>Q9NVG8</id>
        <label>TBC1D13</label>
    </interactant>
    <organismsDiffer>false</organismsDiffer>
    <experiments>3</experiments>
</comment>
<comment type="interaction">
    <interactant intactId="EBI-6255994">
        <id>Q5T7W0</id>
    </interactant>
    <interactant intactId="EBI-10180829">
        <id>Q7KZS0</id>
        <label>UBE2I</label>
    </interactant>
    <organismsDiffer>false</organismsDiffer>
    <experiments>3</experiments>
</comment>
<comment type="interaction">
    <interactant intactId="EBI-6255994">
        <id>Q5T7W0</id>
    </interactant>
    <interactant intactId="EBI-607755">
        <id>Q9BZL1</id>
        <label>UBL5</label>
    </interactant>
    <organismsDiffer>false</organismsDiffer>
    <experiments>3</experiments>
</comment>
<comment type="interaction">
    <interactant intactId="EBI-6255994">
        <id>Q5T7W0</id>
    </interactant>
    <interactant intactId="EBI-6255994">
        <id>Q5T7W0</id>
        <label>ZNF618</label>
    </interactant>
    <organismsDiffer>false</organismsDiffer>
    <experiments>7</experiments>
</comment>
<comment type="subcellular location">
    <subcellularLocation>
        <location evidence="3">Nucleus</location>
    </subcellularLocation>
    <subcellularLocation>
        <location evidence="3">Chromosome</location>
    </subcellularLocation>
    <text evidence="3">Localizes at genomic loci that are enriched for 5-hydroxymethylcytosine (5hmC).</text>
</comment>
<comment type="alternative products">
    <event type="alternative splicing"/>
    <isoform>
        <id>Q5T7W0-1</id>
        <name>1</name>
        <sequence type="displayed"/>
    </isoform>
    <isoform>
        <id>Q5T7W0-2</id>
        <name>2</name>
        <sequence type="described" ref="VSP_025179 VSP_025180 VSP_025181"/>
    </isoform>
    <isoform>
        <id>Q5T7W0-3</id>
        <name>3</name>
        <sequence type="described" ref="VSP_025179 VSP_025182 VSP_025183"/>
    </isoform>
    <isoform>
        <id>Q5T7W0-4</id>
        <name>4</name>
        <sequence type="described" ref="VSP_025179 VSP_055968"/>
    </isoform>
</comment>
<comment type="similarity">
    <text evidence="6">Belongs to the krueppel C2H2-type zinc-finger protein family.</text>
</comment>
<comment type="sequence caution" evidence="6">
    <conflict type="erroneous termination">
        <sequence resource="EMBL-CDS" id="AAH36039"/>
    </conflict>
    <text>Truncated C-terminus.</text>
</comment>
<comment type="sequence caution" evidence="6">
    <conflict type="erroneous initiation">
        <sequence resource="EMBL-CDS" id="AAH53892"/>
    </conflict>
</comment>
<comment type="sequence caution" evidence="6">
    <conflict type="erroneous initiation">
        <sequence resource="EMBL-CDS" id="BAB85538"/>
    </conflict>
</comment>
<name>ZN618_HUMAN</name>
<protein>
    <recommendedName>
        <fullName>Zinc finger protein 618</fullName>
    </recommendedName>
</protein>
<sequence length="954" mass="104956">MNQPGGAAAPQADGASAAGRKSTASRERLKRSQKSTKVEGPEPVPAEASLSAEQGTMTEVKVKTELPDDYIQEVIWQGEAKEEKKAVSKDGTSDVPAEICVVIGGVRNQQTLDGKAPEGSPHGGSVRSRYSGTWIFDQALRYASGSYECGICGKKYKYYNCFQTHVRAHRDTEATSGEGASQSNNFRYTCDICGKKYKYYSCFQEHRDLHAVDVFSVEGAPENRADPFDQGVVATDEVKEEPPEPFQKIGPKTGNYTCEFCGKQYKYYTPYQEHVALHAPISTAPGWEPPDDPDTGSECSHPEVSPSPRFVAAKTQTNQSGKKAPASVVRCATLLHRTPPATQTQTFRTPNSGSPASKATAAESAFSRRVEGKAQNHFEETNSSSQNSSEPYTCGACGIQFQFYNNLLEHMQSHAADNENNIASNQSRSPPAVVEEKWKPQAQRNSANNTTTSGLTPNSMIPEKERQNIAERLLRVMCADLGALSVVSGKEFLKLAQTLVDSGARYGAFSVTEILGNFNTLALKHLPRMYNQVKVKVTCALGSNACLGIGVTCHSQSVGPDSCYILTAYQAEGNHIKSYVLGVKGADIRDSGDLVHHWVQNVLSEFVMSEIRTVYVTDCRVSTSAFSKAGMCLRCSACALNSVVQSVLSKRTLQARSMHEVIELLNVCEDLAGSTGLAKETFGSLEETSPPPCWNSVTDSLLLVHERYEQICEFYSRAKKMNLIQSLNKHLLSNLAAILTPVKQAVIELSNESQPTLQLVLPTYVRLEKLFTAKANDAGTVSKLCHLFLEALKENFKVHPAHKVAMILDPQQKLRPVPPYQHEEIIGKVCELINEVKESWAEEADFEPAAKKPRSAAVENPAAQEDDRLGKNEVYDYLQEPLFQATPDLFQYWSCVTQKHTKLAKLAFWLLAVPAVGARSGCVNMCEQALLIKRRRLLSPEDMNKLMFLKSNML</sequence>
<feature type="chain" id="PRO_0000286811" description="Zinc finger protein 618">
    <location>
        <begin position="1"/>
        <end position="954"/>
    </location>
</feature>
<feature type="zinc finger region" description="C2H2-type 1" evidence="1">
    <location>
        <begin position="147"/>
        <end position="169"/>
    </location>
</feature>
<feature type="zinc finger region" description="C2H2-type 2" evidence="1">
    <location>
        <begin position="188"/>
        <end position="210"/>
    </location>
</feature>
<feature type="zinc finger region" description="C2H2-type 3" evidence="1">
    <location>
        <begin position="256"/>
        <end position="278"/>
    </location>
</feature>
<feature type="zinc finger region" description="C2H2-type 4" evidence="1">
    <location>
        <begin position="392"/>
        <end position="414"/>
    </location>
</feature>
<feature type="region of interest" description="Disordered" evidence="2">
    <location>
        <begin position="1"/>
        <end position="56"/>
    </location>
</feature>
<feature type="region of interest" description="Disordered" evidence="2">
    <location>
        <begin position="282"/>
        <end position="307"/>
    </location>
</feature>
<feature type="region of interest" description="Disordered" evidence="2">
    <location>
        <begin position="337"/>
        <end position="390"/>
    </location>
</feature>
<feature type="region of interest" description="Disordered" evidence="2">
    <location>
        <begin position="421"/>
        <end position="463"/>
    </location>
</feature>
<feature type="compositionally biased region" description="Low complexity" evidence="2">
    <location>
        <begin position="1"/>
        <end position="19"/>
    </location>
</feature>
<feature type="compositionally biased region" description="Polar residues" evidence="2">
    <location>
        <begin position="340"/>
        <end position="357"/>
    </location>
</feature>
<feature type="compositionally biased region" description="Basic and acidic residues" evidence="2">
    <location>
        <begin position="366"/>
        <end position="380"/>
    </location>
</feature>
<feature type="compositionally biased region" description="Polar residues" evidence="2">
    <location>
        <begin position="442"/>
        <end position="459"/>
    </location>
</feature>
<feature type="modified residue" description="N-acetylmethionine" evidence="7 8">
    <location>
        <position position="1"/>
    </location>
</feature>
<feature type="cross-link" description="Glycyl lysine isopeptide (Lys-Gly) (interchain with G-Cter in SUMO2)" evidence="9 10 11">
    <location>
        <position position="63"/>
    </location>
</feature>
<feature type="cross-link" description="Glycyl lysine isopeptide (Lys-Gly) (interchain with G-Cter in SUMO2)" evidence="11">
    <location>
        <position position="81"/>
    </location>
</feature>
<feature type="cross-link" description="Glycyl lysine isopeptide (Lys-Gly) (interchain with G-Cter in SUMO2)" evidence="11">
    <location>
        <position position="239"/>
    </location>
</feature>
<feature type="cross-link" description="Glycyl lysine isopeptide (Lys-Gly) (interchain with G-Cter in SUMO2)" evidence="9 11">
    <location>
        <position position="437"/>
    </location>
</feature>
<feature type="splice variant" id="VSP_025179" description="In isoform 2, isoform 3 and isoform 4." evidence="4 5">
    <location>
        <begin position="113"/>
        <end position="144"/>
    </location>
</feature>
<feature type="splice variant" id="VSP_025180" description="In isoform 2." evidence="5">
    <original>K</original>
    <variation>MNNITSDIFKKKEVRQCQKRE</variation>
    <location>
        <position position="252"/>
    </location>
</feature>
<feature type="splice variant" id="VSP_025181" description="In isoform 2." evidence="5">
    <original>STAPGWEPPDDPDTGSECSHPEVSPSPRFVAAKTQTNQSGKKAPASVVRCATLLHRTPPATQTQTFRTPNSGSPASKATAAE</original>
    <variation>K</variation>
    <location>
        <begin position="282"/>
        <end position="363"/>
    </location>
</feature>
<feature type="splice variant" id="VSP_025182" description="In isoform 3." evidence="4">
    <original>TAPGWEPPDDPDTGSECSHPEVSPSPRFVAA</original>
    <variation>EYLLPVGMGVGGPGTGWASRWPGLWNLARKW</variation>
    <location>
        <begin position="283"/>
        <end position="313"/>
    </location>
</feature>
<feature type="splice variant" id="VSP_025183" description="In isoform 3." evidence="4">
    <location>
        <begin position="314"/>
        <end position="954"/>
    </location>
</feature>
<feature type="splice variant" id="VSP_055968" description="In isoform 4." evidence="5">
    <location>
        <position position="361"/>
    </location>
</feature>
<feature type="sequence conflict" description="In Ref. 4; AAI36288." evidence="6" ref="4">
    <original>A</original>
    <variation>T</variation>
    <location>
        <position position="211"/>
    </location>
</feature>
<feature type="sequence conflict" description="In Ref. 4; AAH36039." evidence="6" ref="4">
    <original>I</original>
    <variation>V</variation>
    <location>
        <position position="662"/>
    </location>
</feature>
<proteinExistence type="evidence at protein level"/>
<reference key="1">
    <citation type="journal article" date="2001" name="DNA Res.">
        <title>Prediction of the coding sequences of unidentified human genes. XXII. The complete sequences of 50 new cDNA clones which code for large proteins.</title>
        <authorList>
            <person name="Nagase T."/>
            <person name="Kikuno R."/>
            <person name="Ohara O."/>
        </authorList>
    </citation>
    <scope>NUCLEOTIDE SEQUENCE [LARGE SCALE MRNA] (ISOFORM 1)</scope>
    <source>
        <tissue>Brain</tissue>
    </source>
</reference>
<reference key="2">
    <citation type="journal article" date="2004" name="Nat. Genet.">
        <title>Complete sequencing and characterization of 21,243 full-length human cDNAs.</title>
        <authorList>
            <person name="Ota T."/>
            <person name="Suzuki Y."/>
            <person name="Nishikawa T."/>
            <person name="Otsuki T."/>
            <person name="Sugiyama T."/>
            <person name="Irie R."/>
            <person name="Wakamatsu A."/>
            <person name="Hayashi K."/>
            <person name="Sato H."/>
            <person name="Nagai K."/>
            <person name="Kimura K."/>
            <person name="Makita H."/>
            <person name="Sekine M."/>
            <person name="Obayashi M."/>
            <person name="Nishi T."/>
            <person name="Shibahara T."/>
            <person name="Tanaka T."/>
            <person name="Ishii S."/>
            <person name="Yamamoto J."/>
            <person name="Saito K."/>
            <person name="Kawai Y."/>
            <person name="Isono Y."/>
            <person name="Nakamura Y."/>
            <person name="Nagahari K."/>
            <person name="Murakami K."/>
            <person name="Yasuda T."/>
            <person name="Iwayanagi T."/>
            <person name="Wagatsuma M."/>
            <person name="Shiratori A."/>
            <person name="Sudo H."/>
            <person name="Hosoiri T."/>
            <person name="Kaku Y."/>
            <person name="Kodaira H."/>
            <person name="Kondo H."/>
            <person name="Sugawara M."/>
            <person name="Takahashi M."/>
            <person name="Kanda K."/>
            <person name="Yokoi T."/>
            <person name="Furuya T."/>
            <person name="Kikkawa E."/>
            <person name="Omura Y."/>
            <person name="Abe K."/>
            <person name="Kamihara K."/>
            <person name="Katsuta N."/>
            <person name="Sato K."/>
            <person name="Tanikawa M."/>
            <person name="Yamazaki M."/>
            <person name="Ninomiya K."/>
            <person name="Ishibashi T."/>
            <person name="Yamashita H."/>
            <person name="Murakawa K."/>
            <person name="Fujimori K."/>
            <person name="Tanai H."/>
            <person name="Kimata M."/>
            <person name="Watanabe M."/>
            <person name="Hiraoka S."/>
            <person name="Chiba Y."/>
            <person name="Ishida S."/>
            <person name="Ono Y."/>
            <person name="Takiguchi S."/>
            <person name="Watanabe S."/>
            <person name="Yosida M."/>
            <person name="Hotuta T."/>
            <person name="Kusano J."/>
            <person name="Kanehori K."/>
            <person name="Takahashi-Fujii A."/>
            <person name="Hara H."/>
            <person name="Tanase T.-O."/>
            <person name="Nomura Y."/>
            <person name="Togiya S."/>
            <person name="Komai F."/>
            <person name="Hara R."/>
            <person name="Takeuchi K."/>
            <person name="Arita M."/>
            <person name="Imose N."/>
            <person name="Musashino K."/>
            <person name="Yuuki H."/>
            <person name="Oshima A."/>
            <person name="Sasaki N."/>
            <person name="Aotsuka S."/>
            <person name="Yoshikawa Y."/>
            <person name="Matsunawa H."/>
            <person name="Ichihara T."/>
            <person name="Shiohata N."/>
            <person name="Sano S."/>
            <person name="Moriya S."/>
            <person name="Momiyama H."/>
            <person name="Satoh N."/>
            <person name="Takami S."/>
            <person name="Terashima Y."/>
            <person name="Suzuki O."/>
            <person name="Nakagawa S."/>
            <person name="Senoh A."/>
            <person name="Mizoguchi H."/>
            <person name="Goto Y."/>
            <person name="Shimizu F."/>
            <person name="Wakebe H."/>
            <person name="Hishigaki H."/>
            <person name="Watanabe T."/>
            <person name="Sugiyama A."/>
            <person name="Takemoto M."/>
            <person name="Kawakami B."/>
            <person name="Yamazaki M."/>
            <person name="Watanabe K."/>
            <person name="Kumagai A."/>
            <person name="Itakura S."/>
            <person name="Fukuzumi Y."/>
            <person name="Fujimori Y."/>
            <person name="Komiyama M."/>
            <person name="Tashiro H."/>
            <person name="Tanigami A."/>
            <person name="Fujiwara T."/>
            <person name="Ono T."/>
            <person name="Yamada K."/>
            <person name="Fujii Y."/>
            <person name="Ozaki K."/>
            <person name="Hirao M."/>
            <person name="Ohmori Y."/>
            <person name="Kawabata A."/>
            <person name="Hikiji T."/>
            <person name="Kobatake N."/>
            <person name="Inagaki H."/>
            <person name="Ikema Y."/>
            <person name="Okamoto S."/>
            <person name="Okitani R."/>
            <person name="Kawakami T."/>
            <person name="Noguchi S."/>
            <person name="Itoh T."/>
            <person name="Shigeta K."/>
            <person name="Senba T."/>
            <person name="Matsumura K."/>
            <person name="Nakajima Y."/>
            <person name="Mizuno T."/>
            <person name="Morinaga M."/>
            <person name="Sasaki M."/>
            <person name="Togashi T."/>
            <person name="Oyama M."/>
            <person name="Hata H."/>
            <person name="Watanabe M."/>
            <person name="Komatsu T."/>
            <person name="Mizushima-Sugano J."/>
            <person name="Satoh T."/>
            <person name="Shirai Y."/>
            <person name="Takahashi Y."/>
            <person name="Nakagawa K."/>
            <person name="Okumura K."/>
            <person name="Nagase T."/>
            <person name="Nomura N."/>
            <person name="Kikuchi H."/>
            <person name="Masuho Y."/>
            <person name="Yamashita R."/>
            <person name="Nakai K."/>
            <person name="Yada T."/>
            <person name="Nakamura Y."/>
            <person name="Ohara O."/>
            <person name="Isogai T."/>
            <person name="Sugano S."/>
        </authorList>
    </citation>
    <scope>NUCLEOTIDE SEQUENCE [LARGE SCALE MRNA] (ISOFORM 3)</scope>
    <source>
        <tissue>Amygdala</tissue>
    </source>
</reference>
<reference key="3">
    <citation type="journal article" date="2004" name="Nature">
        <title>DNA sequence and analysis of human chromosome 9.</title>
        <authorList>
            <person name="Humphray S.J."/>
            <person name="Oliver K."/>
            <person name="Hunt A.R."/>
            <person name="Plumb R.W."/>
            <person name="Loveland J.E."/>
            <person name="Howe K.L."/>
            <person name="Andrews T.D."/>
            <person name="Searle S."/>
            <person name="Hunt S.E."/>
            <person name="Scott C.E."/>
            <person name="Jones M.C."/>
            <person name="Ainscough R."/>
            <person name="Almeida J.P."/>
            <person name="Ambrose K.D."/>
            <person name="Ashwell R.I.S."/>
            <person name="Babbage A.K."/>
            <person name="Babbage S."/>
            <person name="Bagguley C.L."/>
            <person name="Bailey J."/>
            <person name="Banerjee R."/>
            <person name="Barker D.J."/>
            <person name="Barlow K.F."/>
            <person name="Bates K."/>
            <person name="Beasley H."/>
            <person name="Beasley O."/>
            <person name="Bird C.P."/>
            <person name="Bray-Allen S."/>
            <person name="Brown A.J."/>
            <person name="Brown J.Y."/>
            <person name="Burford D."/>
            <person name="Burrill W."/>
            <person name="Burton J."/>
            <person name="Carder C."/>
            <person name="Carter N.P."/>
            <person name="Chapman J.C."/>
            <person name="Chen Y."/>
            <person name="Clarke G."/>
            <person name="Clark S.Y."/>
            <person name="Clee C.M."/>
            <person name="Clegg S."/>
            <person name="Collier R.E."/>
            <person name="Corby N."/>
            <person name="Crosier M."/>
            <person name="Cummings A.T."/>
            <person name="Davies J."/>
            <person name="Dhami P."/>
            <person name="Dunn M."/>
            <person name="Dutta I."/>
            <person name="Dyer L.W."/>
            <person name="Earthrowl M.E."/>
            <person name="Faulkner L."/>
            <person name="Fleming C.J."/>
            <person name="Frankish A."/>
            <person name="Frankland J.A."/>
            <person name="French L."/>
            <person name="Fricker D.G."/>
            <person name="Garner P."/>
            <person name="Garnett J."/>
            <person name="Ghori J."/>
            <person name="Gilbert J.G.R."/>
            <person name="Glison C."/>
            <person name="Grafham D.V."/>
            <person name="Gribble S."/>
            <person name="Griffiths C."/>
            <person name="Griffiths-Jones S."/>
            <person name="Grocock R."/>
            <person name="Guy J."/>
            <person name="Hall R.E."/>
            <person name="Hammond S."/>
            <person name="Harley J.L."/>
            <person name="Harrison E.S.I."/>
            <person name="Hart E.A."/>
            <person name="Heath P.D."/>
            <person name="Henderson C.D."/>
            <person name="Hopkins B.L."/>
            <person name="Howard P.J."/>
            <person name="Howden P.J."/>
            <person name="Huckle E."/>
            <person name="Johnson C."/>
            <person name="Johnson D."/>
            <person name="Joy A.A."/>
            <person name="Kay M."/>
            <person name="Keenan S."/>
            <person name="Kershaw J.K."/>
            <person name="Kimberley A.M."/>
            <person name="King A."/>
            <person name="Knights A."/>
            <person name="Laird G.K."/>
            <person name="Langford C."/>
            <person name="Lawlor S."/>
            <person name="Leongamornlert D.A."/>
            <person name="Leversha M."/>
            <person name="Lloyd C."/>
            <person name="Lloyd D.M."/>
            <person name="Lovell J."/>
            <person name="Martin S."/>
            <person name="Mashreghi-Mohammadi M."/>
            <person name="Matthews L."/>
            <person name="McLaren S."/>
            <person name="McLay K.E."/>
            <person name="McMurray A."/>
            <person name="Milne S."/>
            <person name="Nickerson T."/>
            <person name="Nisbett J."/>
            <person name="Nordsiek G."/>
            <person name="Pearce A.V."/>
            <person name="Peck A.I."/>
            <person name="Porter K.M."/>
            <person name="Pandian R."/>
            <person name="Pelan S."/>
            <person name="Phillimore B."/>
            <person name="Povey S."/>
            <person name="Ramsey Y."/>
            <person name="Rand V."/>
            <person name="Scharfe M."/>
            <person name="Sehra H.K."/>
            <person name="Shownkeen R."/>
            <person name="Sims S.K."/>
            <person name="Skuce C.D."/>
            <person name="Smith M."/>
            <person name="Steward C.A."/>
            <person name="Swarbreck D."/>
            <person name="Sycamore N."/>
            <person name="Tester J."/>
            <person name="Thorpe A."/>
            <person name="Tracey A."/>
            <person name="Tromans A."/>
            <person name="Thomas D.W."/>
            <person name="Wall M."/>
            <person name="Wallis J.M."/>
            <person name="West A.P."/>
            <person name="Whitehead S.L."/>
            <person name="Willey D.L."/>
            <person name="Williams S.A."/>
            <person name="Wilming L."/>
            <person name="Wray P.W."/>
            <person name="Young L."/>
            <person name="Ashurst J.L."/>
            <person name="Coulson A."/>
            <person name="Blocker H."/>
            <person name="Durbin R.M."/>
            <person name="Sulston J.E."/>
            <person name="Hubbard T."/>
            <person name="Jackson M.J."/>
            <person name="Bentley D.R."/>
            <person name="Beck S."/>
            <person name="Rogers J."/>
            <person name="Dunham I."/>
        </authorList>
    </citation>
    <scope>NUCLEOTIDE SEQUENCE [LARGE SCALE GENOMIC DNA]</scope>
</reference>
<reference key="4">
    <citation type="journal article" date="2004" name="Genome Res.">
        <title>The status, quality, and expansion of the NIH full-length cDNA project: the Mammalian Gene Collection (MGC).</title>
        <authorList>
            <consortium name="The MGC Project Team"/>
        </authorList>
    </citation>
    <scope>NUCLEOTIDE SEQUENCE [LARGE SCALE MRNA] (ISOFORMS 1; 2 AND 4)</scope>
    <source>
        <tissue>Eye</tissue>
        <tissue>Kidney</tissue>
        <tissue>Testis</tissue>
    </source>
</reference>
<reference key="5">
    <citation type="journal article" date="2008" name="Proc. Natl. Acad. Sci. U.S.A.">
        <title>A quantitative atlas of mitotic phosphorylation.</title>
        <authorList>
            <person name="Dephoure N."/>
            <person name="Zhou C."/>
            <person name="Villen J."/>
            <person name="Beausoleil S.A."/>
            <person name="Bakalarski C.E."/>
            <person name="Elledge S.J."/>
            <person name="Gygi S.P."/>
        </authorList>
    </citation>
    <scope>IDENTIFICATION BY MASS SPECTROMETRY [LARGE SCALE ANALYSIS]</scope>
    <source>
        <tissue>Cervix carcinoma</tissue>
    </source>
</reference>
<reference key="6">
    <citation type="journal article" date="2009" name="Anal. Chem.">
        <title>Lys-N and trypsin cover complementary parts of the phosphoproteome in a refined SCX-based approach.</title>
        <authorList>
            <person name="Gauci S."/>
            <person name="Helbig A.O."/>
            <person name="Slijper M."/>
            <person name="Krijgsveld J."/>
            <person name="Heck A.J."/>
            <person name="Mohammed S."/>
        </authorList>
    </citation>
    <scope>ACETYLATION [LARGE SCALE ANALYSIS] AT MET-1</scope>
    <scope>IDENTIFICATION BY MASS SPECTROMETRY [LARGE SCALE ANALYSIS]</scope>
</reference>
<reference key="7">
    <citation type="journal article" date="2012" name="Proc. Natl. Acad. Sci. U.S.A.">
        <title>N-terminal acetylome analyses and functional insights of the N-terminal acetyltransferase NatB.</title>
        <authorList>
            <person name="Van Damme P."/>
            <person name="Lasa M."/>
            <person name="Polevoda B."/>
            <person name="Gazquez C."/>
            <person name="Elosegui-Artola A."/>
            <person name="Kim D.S."/>
            <person name="De Juan-Pardo E."/>
            <person name="Demeyer K."/>
            <person name="Hole K."/>
            <person name="Larrea E."/>
            <person name="Timmerman E."/>
            <person name="Prieto J."/>
            <person name="Arnesen T."/>
            <person name="Sherman F."/>
            <person name="Gevaert K."/>
            <person name="Aldabe R."/>
        </authorList>
    </citation>
    <scope>ACETYLATION [LARGE SCALE ANALYSIS] AT MET-1</scope>
    <scope>IDENTIFICATION BY MASS SPECTROMETRY [LARGE SCALE ANALYSIS]</scope>
</reference>
<reference key="8">
    <citation type="journal article" date="2015" name="Cell Rep.">
        <title>SUMO-2 orchestrates chromatin modifiers in response to DNA damage.</title>
        <authorList>
            <person name="Hendriks I.A."/>
            <person name="Treffers L.W."/>
            <person name="Verlaan-de Vries M."/>
            <person name="Olsen J.V."/>
            <person name="Vertegaal A.C."/>
        </authorList>
    </citation>
    <scope>SUMOYLATION [LARGE SCALE ANALYSIS] AT LYS-63</scope>
    <scope>IDENTIFICATION BY MASS SPECTROMETRY [LARGE SCALE ANALYSIS]</scope>
</reference>
<reference key="9">
    <citation type="journal article" date="2015" name="Mol. Cell. Proteomics">
        <title>System-wide analysis of SUMOylation dynamics in response to replication stress reveals novel small ubiquitin-like modified target proteins and acceptor lysines relevant for genome stability.</title>
        <authorList>
            <person name="Xiao Z."/>
            <person name="Chang J.G."/>
            <person name="Hendriks I.A."/>
            <person name="Sigurdsson J.O."/>
            <person name="Olsen J.V."/>
            <person name="Vertegaal A.C."/>
        </authorList>
    </citation>
    <scope>SUMOYLATION [LARGE SCALE ANALYSIS] AT LYS-63 AND LYS-437</scope>
    <scope>IDENTIFICATION BY MASS SPECTROMETRY [LARGE SCALE ANALYSIS]</scope>
</reference>
<reference key="10">
    <citation type="journal article" date="2016" name="J. Biol. Chem.">
        <title>Zinc Finger Protein 618 Regulates the Function of UHRF2 (Ubiquitin-like with PHD and Ring Finger Domains 2) as a Specific 5-Hydroxymethylcytosine Reader.</title>
        <authorList>
            <person name="Liu Y."/>
            <person name="Zhang B."/>
            <person name="Kuang H."/>
            <person name="Korakavi G."/>
            <person name="Lu L.Y."/>
            <person name="Yu X."/>
        </authorList>
    </citation>
    <scope>FUNCTION</scope>
    <scope>INTERACTION WITH UHRF2</scope>
    <scope>SUBCELLULAR LOCATION</scope>
</reference>
<reference key="11">
    <citation type="journal article" date="2017" name="Nat. Struct. Mol. Biol.">
        <title>Site-specific mapping of the human SUMO proteome reveals co-modification with phosphorylation.</title>
        <authorList>
            <person name="Hendriks I.A."/>
            <person name="Lyon D."/>
            <person name="Young C."/>
            <person name="Jensen L.J."/>
            <person name="Vertegaal A.C."/>
            <person name="Nielsen M.L."/>
        </authorList>
    </citation>
    <scope>SUMOYLATION [LARGE SCALE ANALYSIS] AT LYS-63; LYS-81; LYS-239 AND LYS-437</scope>
    <scope>IDENTIFICATION BY MASS SPECTROMETRY [LARGE SCALE ANALYSIS]</scope>
</reference>
<keyword id="KW-0007">Acetylation</keyword>
<keyword id="KW-0025">Alternative splicing</keyword>
<keyword id="KW-0158">Chromosome</keyword>
<keyword id="KW-0238">DNA-binding</keyword>
<keyword id="KW-1017">Isopeptide bond</keyword>
<keyword id="KW-0479">Metal-binding</keyword>
<keyword id="KW-0539">Nucleus</keyword>
<keyword id="KW-1267">Proteomics identification</keyword>
<keyword id="KW-1185">Reference proteome</keyword>
<keyword id="KW-0677">Repeat</keyword>
<keyword id="KW-0804">Transcription</keyword>
<keyword id="KW-0805">Transcription regulation</keyword>
<keyword id="KW-0832">Ubl conjugation</keyword>
<keyword id="KW-0862">Zinc</keyword>
<keyword id="KW-0863">Zinc-finger</keyword>
<accession>Q5T7W0</accession>
<accession>B9EG82</accession>
<accession>Q4G0X6</accession>
<accession>Q5T7W1</accession>
<accession>Q6ZT53</accession>
<accession>Q7Z6B9</accession>
<accession>Q8TF49</accession>
<accession>Q96E49</accession>
<gene>
    <name type="primary">ZNF618</name>
    <name type="synonym">KIAA1952</name>
</gene>
<organism>
    <name type="scientific">Homo sapiens</name>
    <name type="common">Human</name>
    <dbReference type="NCBI Taxonomy" id="9606"/>
    <lineage>
        <taxon>Eukaryota</taxon>
        <taxon>Metazoa</taxon>
        <taxon>Chordata</taxon>
        <taxon>Craniata</taxon>
        <taxon>Vertebrata</taxon>
        <taxon>Euteleostomi</taxon>
        <taxon>Mammalia</taxon>
        <taxon>Eutheria</taxon>
        <taxon>Euarchontoglires</taxon>
        <taxon>Primates</taxon>
        <taxon>Haplorrhini</taxon>
        <taxon>Catarrhini</taxon>
        <taxon>Hominidae</taxon>
        <taxon>Homo</taxon>
    </lineage>
</organism>
<dbReference type="EMBL" id="AB075832">
    <property type="protein sequence ID" value="BAB85538.1"/>
    <property type="status" value="ALT_INIT"/>
    <property type="molecule type" value="mRNA"/>
</dbReference>
<dbReference type="EMBL" id="AK126896">
    <property type="status" value="NOT_ANNOTATED_CDS"/>
    <property type="molecule type" value="mRNA"/>
</dbReference>
<dbReference type="EMBL" id="AL137850">
    <property type="status" value="NOT_ANNOTATED_CDS"/>
    <property type="molecule type" value="Genomic_DNA"/>
</dbReference>
<dbReference type="EMBL" id="AL162393">
    <property type="status" value="NOT_ANNOTATED_CDS"/>
    <property type="molecule type" value="Genomic_DNA"/>
</dbReference>
<dbReference type="EMBL" id="BC036039">
    <property type="protein sequence ID" value="AAH36039.1"/>
    <property type="status" value="ALT_SEQ"/>
    <property type="molecule type" value="mRNA"/>
</dbReference>
<dbReference type="EMBL" id="BC053892">
    <property type="protein sequence ID" value="AAH53892.1"/>
    <property type="status" value="ALT_INIT"/>
    <property type="molecule type" value="mRNA"/>
</dbReference>
<dbReference type="EMBL" id="BC012922">
    <property type="protein sequence ID" value="AAH12922.1"/>
    <property type="molecule type" value="mRNA"/>
</dbReference>
<dbReference type="EMBL" id="BC136287">
    <property type="protein sequence ID" value="AAI36288.1"/>
    <property type="molecule type" value="mRNA"/>
</dbReference>
<dbReference type="CCDS" id="CCDS48008.1">
    <molecule id="Q5T7W0-2"/>
</dbReference>
<dbReference type="CCDS" id="CCDS83402.1">
    <molecule id="Q5T7W0-1"/>
</dbReference>
<dbReference type="CCDS" id="CCDS83403.1">
    <molecule id="Q5T7W0-4"/>
</dbReference>
<dbReference type="RefSeq" id="NP_001304969.1">
    <molecule id="Q5T7W0-4"/>
    <property type="nucleotide sequence ID" value="NM_001318040.2"/>
</dbReference>
<dbReference type="RefSeq" id="NP_001304970.1">
    <property type="nucleotide sequence ID" value="NM_001318041.1"/>
</dbReference>
<dbReference type="RefSeq" id="NP_001304971.1">
    <molecule id="Q5T7W0-1"/>
    <property type="nucleotide sequence ID" value="NM_001318042.2"/>
</dbReference>
<dbReference type="RefSeq" id="NP_588615.2">
    <molecule id="Q5T7W0-2"/>
    <property type="nucleotide sequence ID" value="NM_133374.3"/>
</dbReference>
<dbReference type="SMR" id="Q5T7W0"/>
<dbReference type="BioGRID" id="125407">
    <property type="interactions" value="35"/>
</dbReference>
<dbReference type="FunCoup" id="Q5T7W0">
    <property type="interactions" value="260"/>
</dbReference>
<dbReference type="IntAct" id="Q5T7W0">
    <property type="interactions" value="19"/>
</dbReference>
<dbReference type="STRING" id="9606.ENSP00000363241"/>
<dbReference type="iPTMnet" id="Q5T7W0"/>
<dbReference type="PhosphoSitePlus" id="Q5T7W0"/>
<dbReference type="BioMuta" id="ZNF618"/>
<dbReference type="DMDM" id="74762243"/>
<dbReference type="jPOST" id="Q5T7W0"/>
<dbReference type="MassIVE" id="Q5T7W0"/>
<dbReference type="PeptideAtlas" id="Q5T7W0"/>
<dbReference type="ProteomicsDB" id="64691">
    <molecule id="Q5T7W0-1"/>
</dbReference>
<dbReference type="ProteomicsDB" id="64692">
    <molecule id="Q5T7W0-2"/>
</dbReference>
<dbReference type="ProteomicsDB" id="64693">
    <molecule id="Q5T7W0-3"/>
</dbReference>
<dbReference type="Pumba" id="Q5T7W0"/>
<dbReference type="Antibodypedia" id="29860">
    <property type="antibodies" value="35 antibodies from 14 providers"/>
</dbReference>
<dbReference type="DNASU" id="114991"/>
<dbReference type="Ensembl" id="ENST00000288466.11">
    <molecule id="Q5T7W0-2"/>
    <property type="protein sequence ID" value="ENSP00000288466.7"/>
    <property type="gene ID" value="ENSG00000157657.15"/>
</dbReference>
<dbReference type="Ensembl" id="ENST00000374126.10">
    <molecule id="Q5T7W0-1"/>
    <property type="protein sequence ID" value="ENSP00000363241.5"/>
    <property type="gene ID" value="ENSG00000157657.15"/>
</dbReference>
<dbReference type="Ensembl" id="ENST00000615615.4">
    <molecule id="Q5T7W0-4"/>
    <property type="protein sequence ID" value="ENSP00000483198.1"/>
    <property type="gene ID" value="ENSG00000157657.15"/>
</dbReference>
<dbReference type="GeneID" id="114991"/>
<dbReference type="KEGG" id="hsa:114991"/>
<dbReference type="MANE-Select" id="ENST00000374126.10">
    <property type="protein sequence ID" value="ENSP00000363241.5"/>
    <property type="RefSeq nucleotide sequence ID" value="NM_001318042.2"/>
    <property type="RefSeq protein sequence ID" value="NP_001304971.1"/>
</dbReference>
<dbReference type="UCSC" id="uc004bic.4">
    <molecule id="Q5T7W0-1"/>
    <property type="organism name" value="human"/>
</dbReference>
<dbReference type="AGR" id="HGNC:29416"/>
<dbReference type="CTD" id="114991"/>
<dbReference type="DisGeNET" id="114991"/>
<dbReference type="GeneCards" id="ZNF618"/>
<dbReference type="HGNC" id="HGNC:29416">
    <property type="gene designation" value="ZNF618"/>
</dbReference>
<dbReference type="HPA" id="ENSG00000157657">
    <property type="expression patterns" value="Low tissue specificity"/>
</dbReference>
<dbReference type="neXtProt" id="NX_Q5T7W0"/>
<dbReference type="OpenTargets" id="ENSG00000157657"/>
<dbReference type="PharmGKB" id="PA31532"/>
<dbReference type="VEuPathDB" id="HostDB:ENSG00000157657"/>
<dbReference type="GeneTree" id="ENSGT00940000153306"/>
<dbReference type="HOGENOM" id="CLU_315147_0_0_1"/>
<dbReference type="InParanoid" id="Q5T7W0"/>
<dbReference type="OMA" id="FLEPYTC"/>
<dbReference type="OrthoDB" id="10051975at2759"/>
<dbReference type="PAN-GO" id="Q5T7W0">
    <property type="GO annotations" value="0 GO annotations based on evolutionary models"/>
</dbReference>
<dbReference type="PhylomeDB" id="Q5T7W0"/>
<dbReference type="TreeFam" id="TF331270"/>
<dbReference type="PathwayCommons" id="Q5T7W0"/>
<dbReference type="SignaLink" id="Q5T7W0"/>
<dbReference type="BioGRID-ORCS" id="114991">
    <property type="hits" value="5 hits in 1160 CRISPR screens"/>
</dbReference>
<dbReference type="ChiTaRS" id="ZNF618">
    <property type="organism name" value="human"/>
</dbReference>
<dbReference type="GenomeRNAi" id="114991"/>
<dbReference type="Pharos" id="Q5T7W0">
    <property type="development level" value="Tdark"/>
</dbReference>
<dbReference type="PRO" id="PR:Q5T7W0"/>
<dbReference type="Proteomes" id="UP000005640">
    <property type="component" value="Chromosome 9"/>
</dbReference>
<dbReference type="RNAct" id="Q5T7W0">
    <property type="molecule type" value="protein"/>
</dbReference>
<dbReference type="Bgee" id="ENSG00000157657">
    <property type="expression patterns" value="Expressed in secondary oocyte and 167 other cell types or tissues"/>
</dbReference>
<dbReference type="ExpressionAtlas" id="Q5T7W0">
    <property type="expression patterns" value="baseline and differential"/>
</dbReference>
<dbReference type="GO" id="GO:0000785">
    <property type="term" value="C:chromatin"/>
    <property type="evidence" value="ECO:0000314"/>
    <property type="project" value="UniProtKB"/>
</dbReference>
<dbReference type="GO" id="GO:0005634">
    <property type="term" value="C:nucleus"/>
    <property type="evidence" value="ECO:0007669"/>
    <property type="project" value="UniProtKB-SubCell"/>
</dbReference>
<dbReference type="GO" id="GO:0005721">
    <property type="term" value="C:pericentric heterochromatin"/>
    <property type="evidence" value="ECO:0000314"/>
    <property type="project" value="ARUK-UCL"/>
</dbReference>
<dbReference type="GO" id="GO:0140463">
    <property type="term" value="F:chromatin-protein adaptor activity"/>
    <property type="evidence" value="ECO:0000314"/>
    <property type="project" value="ARUK-UCL"/>
</dbReference>
<dbReference type="GO" id="GO:0003677">
    <property type="term" value="F:DNA binding"/>
    <property type="evidence" value="ECO:0007669"/>
    <property type="project" value="UniProtKB-KW"/>
</dbReference>
<dbReference type="GO" id="GO:0042802">
    <property type="term" value="F:identical protein binding"/>
    <property type="evidence" value="ECO:0000353"/>
    <property type="project" value="IntAct"/>
</dbReference>
<dbReference type="GO" id="GO:0001221">
    <property type="term" value="F:transcription coregulator binding"/>
    <property type="evidence" value="ECO:0000353"/>
    <property type="project" value="ARUK-UCL"/>
</dbReference>
<dbReference type="GO" id="GO:0008270">
    <property type="term" value="F:zinc ion binding"/>
    <property type="evidence" value="ECO:0007669"/>
    <property type="project" value="UniProtKB-KW"/>
</dbReference>
<dbReference type="GO" id="GO:0006357">
    <property type="term" value="P:regulation of transcription by RNA polymerase II"/>
    <property type="evidence" value="ECO:0000303"/>
    <property type="project" value="ARUK-UCL"/>
</dbReference>
<dbReference type="FunFam" id="3.30.160.60:FF:001302">
    <property type="entry name" value="Zinc finger protein 618"/>
    <property type="match status" value="1"/>
</dbReference>
<dbReference type="FunFam" id="1.10.10.1070:FF:000001">
    <property type="entry name" value="zinc finger protein 618 isoform X2"/>
    <property type="match status" value="1"/>
</dbReference>
<dbReference type="Gene3D" id="3.30.160.60">
    <property type="entry name" value="Classic Zinc Finger"/>
    <property type="match status" value="2"/>
</dbReference>
<dbReference type="Gene3D" id="1.10.10.1070">
    <property type="entry name" value="Zinc finger, BED domain-containing"/>
    <property type="match status" value="1"/>
</dbReference>
<dbReference type="InterPro" id="IPR012337">
    <property type="entry name" value="RNaseH-like_sf"/>
</dbReference>
<dbReference type="InterPro" id="IPR036236">
    <property type="entry name" value="Znf_C2H2_sf"/>
</dbReference>
<dbReference type="InterPro" id="IPR013087">
    <property type="entry name" value="Znf_C2H2_type"/>
</dbReference>
<dbReference type="PANTHER" id="PTHR24383">
    <property type="entry name" value="ZINC FINGER PROTEIN"/>
    <property type="match status" value="1"/>
</dbReference>
<dbReference type="PANTHER" id="PTHR24383:SF12">
    <property type="entry name" value="ZINC FINGER PROTEIN 618"/>
    <property type="match status" value="1"/>
</dbReference>
<dbReference type="SMART" id="SM00355">
    <property type="entry name" value="ZnF_C2H2"/>
    <property type="match status" value="4"/>
</dbReference>
<dbReference type="SUPFAM" id="SSF57667">
    <property type="entry name" value="beta-beta-alpha zinc fingers"/>
    <property type="match status" value="2"/>
</dbReference>
<dbReference type="SUPFAM" id="SSF140996">
    <property type="entry name" value="Hermes dimerisation domain"/>
    <property type="match status" value="1"/>
</dbReference>
<dbReference type="SUPFAM" id="SSF53098">
    <property type="entry name" value="Ribonuclease H-like"/>
    <property type="match status" value="1"/>
</dbReference>
<dbReference type="PROSITE" id="PS00028">
    <property type="entry name" value="ZINC_FINGER_C2H2_1"/>
    <property type="match status" value="4"/>
</dbReference>
<dbReference type="PROSITE" id="PS50157">
    <property type="entry name" value="ZINC_FINGER_C2H2_2"/>
    <property type="match status" value="4"/>
</dbReference>
<evidence type="ECO:0000255" key="1">
    <source>
        <dbReference type="PROSITE-ProRule" id="PRU00042"/>
    </source>
</evidence>
<evidence type="ECO:0000256" key="2">
    <source>
        <dbReference type="SAM" id="MobiDB-lite"/>
    </source>
</evidence>
<evidence type="ECO:0000269" key="3">
    <source>
    </source>
</evidence>
<evidence type="ECO:0000303" key="4">
    <source>
    </source>
</evidence>
<evidence type="ECO:0000303" key="5">
    <source>
    </source>
</evidence>
<evidence type="ECO:0000305" key="6"/>
<evidence type="ECO:0007744" key="7">
    <source>
    </source>
</evidence>
<evidence type="ECO:0007744" key="8">
    <source>
    </source>
</evidence>
<evidence type="ECO:0007744" key="9">
    <source>
    </source>
</evidence>
<evidence type="ECO:0007744" key="10">
    <source>
    </source>
</evidence>
<evidence type="ECO:0007744" key="11">
    <source>
    </source>
</evidence>